<reference key="1">
    <citation type="journal article" date="2005" name="Genome Res.">
        <title>The Chlamydophila abortus genome sequence reveals an array of variable proteins that contribute to interspecies variation.</title>
        <authorList>
            <person name="Thomson N.R."/>
            <person name="Yeats C."/>
            <person name="Bell K."/>
            <person name="Holden M.T.G."/>
            <person name="Bentley S.D."/>
            <person name="Livingstone M."/>
            <person name="Cerdeno-Tarraga A.-M."/>
            <person name="Harris B."/>
            <person name="Doggett J."/>
            <person name="Ormond D."/>
            <person name="Mungall K."/>
            <person name="Clarke K."/>
            <person name="Feltwell T."/>
            <person name="Hance Z."/>
            <person name="Sanders M."/>
            <person name="Quail M.A."/>
            <person name="Price C."/>
            <person name="Barrell B.G."/>
            <person name="Parkhill J."/>
            <person name="Longbottom D."/>
        </authorList>
    </citation>
    <scope>NUCLEOTIDE SEQUENCE [LARGE SCALE GENOMIC DNA]</scope>
    <source>
        <strain>DSM 27085 / S26/3</strain>
    </source>
</reference>
<organism>
    <name type="scientific">Chlamydia abortus (strain DSM 27085 / S26/3)</name>
    <name type="common">Chlamydophila abortus</name>
    <dbReference type="NCBI Taxonomy" id="218497"/>
    <lineage>
        <taxon>Bacteria</taxon>
        <taxon>Pseudomonadati</taxon>
        <taxon>Chlamydiota</taxon>
        <taxon>Chlamydiia</taxon>
        <taxon>Chlamydiales</taxon>
        <taxon>Chlamydiaceae</taxon>
        <taxon>Chlamydia/Chlamydophila group</taxon>
        <taxon>Chlamydia</taxon>
    </lineage>
</organism>
<protein>
    <recommendedName>
        <fullName evidence="1">DNA replication and repair protein RecF</fullName>
    </recommendedName>
</protein>
<sequence>MNILSLRLKNFRNYKEAEVSLSPNINYIFGENAQGKTNLIEALYVLSLGRSFRTSHLTEAIFFGSSYFFLEMTFEKDGVPHTLSTYVDKHGKKIFCDQSPIKTLSQLIGMIPIVLFSAKDRCLIAGAPSDRRLFLNLLLSQCDPQYKHSLSYYHRALLQRNTLLKTKQTSTLSVWDEQLATLGSYLCLSRYTCCAQLNQLIQTLWNNSLSERLFIKFKSSLIKQCKISQEAVKNELHKQLTASLHRDLELGNTSVGPHREDFTLMINDLPVAQFSSEGQKHSLLAVLKLAESLYIKSLHNVYPLFCMDDIHAGLDNQRISQLLGLAPSLGQTLITSTTLPHQTLSEANRIFSVNQAQISIHSHAIIK</sequence>
<feature type="chain" id="PRO_0000236115" description="DNA replication and repair protein RecF">
    <location>
        <begin position="1"/>
        <end position="367"/>
    </location>
</feature>
<feature type="binding site" evidence="1">
    <location>
        <begin position="30"/>
        <end position="37"/>
    </location>
    <ligand>
        <name>ATP</name>
        <dbReference type="ChEBI" id="CHEBI:30616"/>
    </ligand>
</feature>
<proteinExistence type="inferred from homology"/>
<gene>
    <name evidence="1" type="primary">recF</name>
    <name type="ordered locus">CAB430</name>
</gene>
<keyword id="KW-0067">ATP-binding</keyword>
<keyword id="KW-0963">Cytoplasm</keyword>
<keyword id="KW-0227">DNA damage</keyword>
<keyword id="KW-0234">DNA repair</keyword>
<keyword id="KW-0235">DNA replication</keyword>
<keyword id="KW-0238">DNA-binding</keyword>
<keyword id="KW-0547">Nucleotide-binding</keyword>
<keyword id="KW-0742">SOS response</keyword>
<dbReference type="EMBL" id="CR848038">
    <property type="protein sequence ID" value="CAH63883.1"/>
    <property type="molecule type" value="Genomic_DNA"/>
</dbReference>
<dbReference type="RefSeq" id="WP_011097065.1">
    <property type="nucleotide sequence ID" value="NC_004552.2"/>
</dbReference>
<dbReference type="SMR" id="Q5L648"/>
<dbReference type="KEGG" id="cab:CAB430"/>
<dbReference type="eggNOG" id="COG1195">
    <property type="taxonomic scope" value="Bacteria"/>
</dbReference>
<dbReference type="HOGENOM" id="CLU_040267_0_1_0"/>
<dbReference type="OrthoDB" id="9803889at2"/>
<dbReference type="Proteomes" id="UP000001012">
    <property type="component" value="Chromosome"/>
</dbReference>
<dbReference type="GO" id="GO:0005737">
    <property type="term" value="C:cytoplasm"/>
    <property type="evidence" value="ECO:0007669"/>
    <property type="project" value="UniProtKB-SubCell"/>
</dbReference>
<dbReference type="GO" id="GO:0005524">
    <property type="term" value="F:ATP binding"/>
    <property type="evidence" value="ECO:0007669"/>
    <property type="project" value="UniProtKB-UniRule"/>
</dbReference>
<dbReference type="GO" id="GO:0003697">
    <property type="term" value="F:single-stranded DNA binding"/>
    <property type="evidence" value="ECO:0007669"/>
    <property type="project" value="UniProtKB-UniRule"/>
</dbReference>
<dbReference type="GO" id="GO:0006260">
    <property type="term" value="P:DNA replication"/>
    <property type="evidence" value="ECO:0007669"/>
    <property type="project" value="UniProtKB-UniRule"/>
</dbReference>
<dbReference type="GO" id="GO:0000731">
    <property type="term" value="P:DNA synthesis involved in DNA repair"/>
    <property type="evidence" value="ECO:0007669"/>
    <property type="project" value="TreeGrafter"/>
</dbReference>
<dbReference type="GO" id="GO:0006302">
    <property type="term" value="P:double-strand break repair"/>
    <property type="evidence" value="ECO:0007669"/>
    <property type="project" value="TreeGrafter"/>
</dbReference>
<dbReference type="GO" id="GO:0009432">
    <property type="term" value="P:SOS response"/>
    <property type="evidence" value="ECO:0007669"/>
    <property type="project" value="UniProtKB-UniRule"/>
</dbReference>
<dbReference type="Gene3D" id="3.40.50.300">
    <property type="entry name" value="P-loop containing nucleotide triphosphate hydrolases"/>
    <property type="match status" value="1"/>
</dbReference>
<dbReference type="Gene3D" id="1.20.1050.90">
    <property type="entry name" value="RecF/RecN/SMC, N-terminal domain"/>
    <property type="match status" value="1"/>
</dbReference>
<dbReference type="HAMAP" id="MF_00365">
    <property type="entry name" value="RecF"/>
    <property type="match status" value="1"/>
</dbReference>
<dbReference type="InterPro" id="IPR001238">
    <property type="entry name" value="DNA-binding_RecF"/>
</dbReference>
<dbReference type="InterPro" id="IPR018078">
    <property type="entry name" value="DNA-binding_RecF_CS"/>
</dbReference>
<dbReference type="InterPro" id="IPR027417">
    <property type="entry name" value="P-loop_NTPase"/>
</dbReference>
<dbReference type="InterPro" id="IPR003395">
    <property type="entry name" value="RecF/RecN/SMC_N"/>
</dbReference>
<dbReference type="InterPro" id="IPR042174">
    <property type="entry name" value="RecF_2"/>
</dbReference>
<dbReference type="NCBIfam" id="TIGR00611">
    <property type="entry name" value="recf"/>
    <property type="match status" value="1"/>
</dbReference>
<dbReference type="PANTHER" id="PTHR32182">
    <property type="entry name" value="DNA REPLICATION AND REPAIR PROTEIN RECF"/>
    <property type="match status" value="1"/>
</dbReference>
<dbReference type="PANTHER" id="PTHR32182:SF0">
    <property type="entry name" value="DNA REPLICATION AND REPAIR PROTEIN RECF"/>
    <property type="match status" value="1"/>
</dbReference>
<dbReference type="Pfam" id="PF02463">
    <property type="entry name" value="SMC_N"/>
    <property type="match status" value="1"/>
</dbReference>
<dbReference type="SUPFAM" id="SSF52540">
    <property type="entry name" value="P-loop containing nucleoside triphosphate hydrolases"/>
    <property type="match status" value="1"/>
</dbReference>
<dbReference type="PROSITE" id="PS00617">
    <property type="entry name" value="RECF_1"/>
    <property type="match status" value="1"/>
</dbReference>
<dbReference type="PROSITE" id="PS00618">
    <property type="entry name" value="RECF_2"/>
    <property type="match status" value="1"/>
</dbReference>
<comment type="function">
    <text evidence="1">The RecF protein is involved in DNA metabolism; it is required for DNA replication and normal SOS inducibility. RecF binds preferentially to single-stranded, linear DNA. It also seems to bind ATP.</text>
</comment>
<comment type="subcellular location">
    <subcellularLocation>
        <location evidence="1">Cytoplasm</location>
    </subcellularLocation>
</comment>
<comment type="similarity">
    <text evidence="1">Belongs to the RecF family.</text>
</comment>
<name>RECF_CHLAB</name>
<accession>Q5L648</accession>
<evidence type="ECO:0000255" key="1">
    <source>
        <dbReference type="HAMAP-Rule" id="MF_00365"/>
    </source>
</evidence>